<keyword id="KW-0072">Autophagy</keyword>
<keyword id="KW-0256">Endoplasmic reticulum</keyword>
<keyword id="KW-0479">Metal-binding</keyword>
<keyword id="KW-0539">Nucleus</keyword>
<keyword id="KW-1185">Reference proteome</keyword>
<keyword id="KW-0677">Repeat</keyword>
<keyword id="KW-0808">Transferase</keyword>
<keyword id="KW-0833">Ubl conjugation pathway</keyword>
<keyword id="KW-0862">Zinc</keyword>
<keyword id="KW-0863">Zinc-finger</keyword>
<dbReference type="EC" id="2.3.2.27"/>
<dbReference type="EMBL" id="BK001524">
    <property type="protein sequence ID" value="DAA01959.1"/>
    <property type="molecule type" value="mRNA"/>
</dbReference>
<dbReference type="RefSeq" id="NP_954706.1">
    <property type="nucleotide sequence ID" value="NM_199236.2"/>
</dbReference>
<dbReference type="SMR" id="Q6IMG5"/>
<dbReference type="FunCoup" id="Q6IMG5">
    <property type="interactions" value="1122"/>
</dbReference>
<dbReference type="STRING" id="10116.ENSRNOP00000030625"/>
<dbReference type="PhosphoSitePlus" id="Q6IMG5"/>
<dbReference type="PaxDb" id="10116-ENSRNOP00000030625"/>
<dbReference type="Ensembl" id="ENSRNOT00000031656.3">
    <property type="protein sequence ID" value="ENSRNOP00000030625.2"/>
    <property type="gene ID" value="ENSRNOG00000026286.3"/>
</dbReference>
<dbReference type="GeneID" id="364682"/>
<dbReference type="KEGG" id="rno:364682"/>
<dbReference type="AGR" id="RGD:735081"/>
<dbReference type="CTD" id="378884"/>
<dbReference type="RGD" id="735081">
    <property type="gene designation" value="Nhlrc1"/>
</dbReference>
<dbReference type="eggNOG" id="KOG2177">
    <property type="taxonomic scope" value="Eukaryota"/>
</dbReference>
<dbReference type="GeneTree" id="ENSGT00730000111361"/>
<dbReference type="HOGENOM" id="CLU_696320_0_0_1"/>
<dbReference type="InParanoid" id="Q6IMG5"/>
<dbReference type="OMA" id="HHAFGGW"/>
<dbReference type="OrthoDB" id="6105938at2759"/>
<dbReference type="PhylomeDB" id="Q6IMG5"/>
<dbReference type="TreeFam" id="TF331018"/>
<dbReference type="UniPathway" id="UPA00143"/>
<dbReference type="PRO" id="PR:Q6IMG5"/>
<dbReference type="Proteomes" id="UP000002494">
    <property type="component" value="Chromosome 17"/>
</dbReference>
<dbReference type="Bgee" id="ENSRNOG00000026286">
    <property type="expression patterns" value="Expressed in skeletal muscle tissue and 18 other cell types or tissues"/>
</dbReference>
<dbReference type="GO" id="GO:0005829">
    <property type="term" value="C:cytosol"/>
    <property type="evidence" value="ECO:0007669"/>
    <property type="project" value="Ensembl"/>
</dbReference>
<dbReference type="GO" id="GO:0005783">
    <property type="term" value="C:endoplasmic reticulum"/>
    <property type="evidence" value="ECO:0007669"/>
    <property type="project" value="UniProtKB-SubCell"/>
</dbReference>
<dbReference type="GO" id="GO:0005654">
    <property type="term" value="C:nucleoplasm"/>
    <property type="evidence" value="ECO:0007669"/>
    <property type="project" value="Ensembl"/>
</dbReference>
<dbReference type="GO" id="GO:0005634">
    <property type="term" value="C:nucleus"/>
    <property type="evidence" value="ECO:0000250"/>
    <property type="project" value="UniProtKB"/>
</dbReference>
<dbReference type="GO" id="GO:0048471">
    <property type="term" value="C:perinuclear region of cytoplasm"/>
    <property type="evidence" value="ECO:0000266"/>
    <property type="project" value="RGD"/>
</dbReference>
<dbReference type="GO" id="GO:0061630">
    <property type="term" value="F:ubiquitin protein ligase activity"/>
    <property type="evidence" value="ECO:0000266"/>
    <property type="project" value="RGD"/>
</dbReference>
<dbReference type="GO" id="GO:0004842">
    <property type="term" value="F:ubiquitin-protein transferase activity"/>
    <property type="evidence" value="ECO:0000250"/>
    <property type="project" value="UniProtKB"/>
</dbReference>
<dbReference type="GO" id="GO:0008270">
    <property type="term" value="F:zinc ion binding"/>
    <property type="evidence" value="ECO:0007669"/>
    <property type="project" value="UniProtKB-KW"/>
</dbReference>
<dbReference type="GO" id="GO:0006914">
    <property type="term" value="P:autophagy"/>
    <property type="evidence" value="ECO:0000266"/>
    <property type="project" value="RGD"/>
</dbReference>
<dbReference type="GO" id="GO:0005978">
    <property type="term" value="P:glycogen biosynthetic process"/>
    <property type="evidence" value="ECO:0000266"/>
    <property type="project" value="RGD"/>
</dbReference>
<dbReference type="GO" id="GO:0005977">
    <property type="term" value="P:glycogen metabolic process"/>
    <property type="evidence" value="ECO:0000266"/>
    <property type="project" value="RGD"/>
</dbReference>
<dbReference type="GO" id="GO:0031398">
    <property type="term" value="P:positive regulation of protein ubiquitination"/>
    <property type="evidence" value="ECO:0000266"/>
    <property type="project" value="RGD"/>
</dbReference>
<dbReference type="GO" id="GO:0043161">
    <property type="term" value="P:proteasome-mediated ubiquitin-dependent protein catabolic process"/>
    <property type="evidence" value="ECO:0000250"/>
    <property type="project" value="UniProtKB"/>
</dbReference>
<dbReference type="GO" id="GO:0000209">
    <property type="term" value="P:protein polyubiquitination"/>
    <property type="evidence" value="ECO:0000250"/>
    <property type="project" value="UniProtKB"/>
</dbReference>
<dbReference type="GO" id="GO:0016567">
    <property type="term" value="P:protein ubiquitination"/>
    <property type="evidence" value="ECO:0000266"/>
    <property type="project" value="RGD"/>
</dbReference>
<dbReference type="GO" id="GO:0010468">
    <property type="term" value="P:regulation of gene expression"/>
    <property type="evidence" value="ECO:0000266"/>
    <property type="project" value="RGD"/>
</dbReference>
<dbReference type="GO" id="GO:1903076">
    <property type="term" value="P:regulation of protein localization to plasma membrane"/>
    <property type="evidence" value="ECO:0000266"/>
    <property type="project" value="RGD"/>
</dbReference>
<dbReference type="GO" id="GO:0031396">
    <property type="term" value="P:regulation of protein ubiquitination"/>
    <property type="evidence" value="ECO:0000266"/>
    <property type="project" value="RGD"/>
</dbReference>
<dbReference type="GO" id="GO:0034976">
    <property type="term" value="P:response to endoplasmic reticulum stress"/>
    <property type="evidence" value="ECO:0000266"/>
    <property type="project" value="RGD"/>
</dbReference>
<dbReference type="CDD" id="cd14961">
    <property type="entry name" value="NHL_TRIM32_like"/>
    <property type="match status" value="1"/>
</dbReference>
<dbReference type="CDD" id="cd16516">
    <property type="entry name" value="RING-HC_malin"/>
    <property type="match status" value="1"/>
</dbReference>
<dbReference type="FunFam" id="2.120.10.30:FF:000059">
    <property type="entry name" value="E3 ubiquitin-protein ligase NHLRC1"/>
    <property type="match status" value="1"/>
</dbReference>
<dbReference type="FunFam" id="3.30.40.10:FF:000372">
    <property type="entry name" value="E3 ubiquitin-protein ligase NHLRC1"/>
    <property type="match status" value="1"/>
</dbReference>
<dbReference type="Gene3D" id="2.120.10.30">
    <property type="entry name" value="TolB, C-terminal domain"/>
    <property type="match status" value="1"/>
</dbReference>
<dbReference type="Gene3D" id="3.30.40.10">
    <property type="entry name" value="Zinc/RING finger domain, C3HC4 (zinc finger)"/>
    <property type="match status" value="1"/>
</dbReference>
<dbReference type="InterPro" id="IPR011042">
    <property type="entry name" value="6-blade_b-propeller_TolB-like"/>
</dbReference>
<dbReference type="InterPro" id="IPR001258">
    <property type="entry name" value="NHL_repeat"/>
</dbReference>
<dbReference type="InterPro" id="IPR050952">
    <property type="entry name" value="TRIM-NHL_E3_ligases"/>
</dbReference>
<dbReference type="InterPro" id="IPR001841">
    <property type="entry name" value="Znf_RING"/>
</dbReference>
<dbReference type="InterPro" id="IPR013083">
    <property type="entry name" value="Znf_RING/FYVE/PHD"/>
</dbReference>
<dbReference type="InterPro" id="IPR017907">
    <property type="entry name" value="Znf_RING_CS"/>
</dbReference>
<dbReference type="PANTHER" id="PTHR24104:SF47">
    <property type="entry name" value="E3 UBIQUITIN-PROTEIN LIGASE NHLRC1"/>
    <property type="match status" value="1"/>
</dbReference>
<dbReference type="PANTHER" id="PTHR24104">
    <property type="entry name" value="E3 UBIQUITIN-PROTEIN LIGASE NHLRC1-RELATED"/>
    <property type="match status" value="1"/>
</dbReference>
<dbReference type="Pfam" id="PF14634">
    <property type="entry name" value="zf-RING_5"/>
    <property type="match status" value="1"/>
</dbReference>
<dbReference type="SMART" id="SM00184">
    <property type="entry name" value="RING"/>
    <property type="match status" value="1"/>
</dbReference>
<dbReference type="SUPFAM" id="SSF101898">
    <property type="entry name" value="NHL repeat"/>
    <property type="match status" value="1"/>
</dbReference>
<dbReference type="SUPFAM" id="SSF57850">
    <property type="entry name" value="RING/U-box"/>
    <property type="match status" value="1"/>
</dbReference>
<dbReference type="PROSITE" id="PS51125">
    <property type="entry name" value="NHL"/>
    <property type="match status" value="6"/>
</dbReference>
<dbReference type="PROSITE" id="PS00518">
    <property type="entry name" value="ZF_RING_1"/>
    <property type="match status" value="1"/>
</dbReference>
<dbReference type="PROSITE" id="PS50089">
    <property type="entry name" value="ZF_RING_2"/>
    <property type="match status" value="1"/>
</dbReference>
<reference key="1">
    <citation type="journal article" date="2003" name="Nat. Genet.">
        <title>Mutations in NHLRC1 cause progressive myoclonus epilepsy.</title>
        <authorList>
            <person name="Chan E.M."/>
            <person name="Young E.J."/>
            <person name="Ianzano L."/>
            <person name="Munteanu I."/>
            <person name="Zhao X."/>
            <person name="Christopoulos C.C."/>
            <person name="Avanzini G."/>
            <person name="Elia M."/>
            <person name="Ackerley C.A."/>
            <person name="Jovic N.J."/>
            <person name="Bohlega S."/>
            <person name="Andermann E."/>
            <person name="Rouleau G.A."/>
            <person name="Delgado-Escueta A.V."/>
            <person name="Minassian B.A."/>
            <person name="Scherer S.W."/>
        </authorList>
    </citation>
    <scope>NUCLEOTIDE SEQUENCE [MRNA]</scope>
</reference>
<sequence length="396" mass="42089">MGEEAAGVRPELVREAEVSLLECKVCFERFGHRQQRRPRNLPCGHVVCLACVAALAHPRTLALECPFCRRACRACDTSDCLPVLHLLELLGSTLHASPAALSAASCAPGALTCYHAFGGWGTLVNPTGLALCPKTGRVVVVHDGKRRVKIFDSGGGGAHQFGEKGDAAHDVKYPLDVAVTNDCHVVVTDAGDCSLKVFDFFGQIKLVVGKQFSLPWGVEITPHNGVLVTDAEAGTLHLLEADFPEGVLRRIERLQAHLCNPRGVAVSWLTGAIAVLEHPCALGTSSGNNTRVKVFNSSMQLIGQVDSFGLNLLFPSKITASAVTFDHQGNVIVADTSGPAIVCLGKPEEFPALKPMVTHGLSRPVALVFTKENSLLVLDSASHSIKVFKVMEGNGG</sequence>
<gene>
    <name type="primary">Nhlrc1</name>
    <name type="synonym">Epm2b</name>
</gene>
<evidence type="ECO:0000250" key="1"/>
<evidence type="ECO:0000255" key="2">
    <source>
        <dbReference type="PROSITE-ProRule" id="PRU00175"/>
    </source>
</evidence>
<evidence type="ECO:0000305" key="3"/>
<comment type="function">
    <text evidence="1">E3 ubiquitin-protein ligase. Together with the phosphatase EPM2A/laforin, appears to be involved in the clearance of toxic polyglucosan and protein aggregates via multiple pathways. In complex with EPM2A/laforin and HSP70, suppresses the cellular toxicity of misfolded proteins by promoting their degradation through the ubiquitin-proteasome system (UPS). Ubiquitinates the glycogen-targeting protein phosphatase subunits PPP1R3C/PTG and PPP1R3D in a laforin-dependent manner and targets them for proteasome-dependent degradation, thus decreasing glycogen accumulation. Polyubiquitinates EPM2A/laforin and ubiquitinates AGL and targets them for proteasome-dependent degradation. Also promotes proteasome-independent protein degradation through the macroautophagy pathway.</text>
</comment>
<comment type="catalytic activity">
    <reaction>
        <text>S-ubiquitinyl-[E2 ubiquitin-conjugating enzyme]-L-cysteine + [acceptor protein]-L-lysine = [E2 ubiquitin-conjugating enzyme]-L-cysteine + N(6)-ubiquitinyl-[acceptor protein]-L-lysine.</text>
        <dbReference type="EC" id="2.3.2.27"/>
    </reaction>
</comment>
<comment type="pathway">
    <text>Protein modification; protein ubiquitination.</text>
</comment>
<comment type="subunit">
    <text evidence="1">Interacts with AGL. Interacts (via the NHL repeats) with EPM2A/laforin. Forms a complex with EPM2A/laforin and HSP70 (By similarity).</text>
</comment>
<comment type="subcellular location">
    <subcellularLocation>
        <location evidence="1">Endoplasmic reticulum</location>
    </subcellularLocation>
    <subcellularLocation>
        <location evidence="1">Nucleus</location>
    </subcellularLocation>
    <text evidence="1">Localizes at the endoplasmic reticulum and, to a lesser extent, in the nucleus.</text>
</comment>
<comment type="domain">
    <text evidence="1">The RING domain is essential for ubiquitin E3 ligase activity.</text>
</comment>
<proteinExistence type="evidence at transcript level"/>
<name>NHLC1_RAT</name>
<accession>Q6IMG5</accession>
<protein>
    <recommendedName>
        <fullName>E3 ubiquitin-protein ligase NHLRC1</fullName>
        <ecNumber>2.3.2.27</ecNumber>
    </recommendedName>
    <alternativeName>
        <fullName>Malin</fullName>
    </alternativeName>
    <alternativeName>
        <fullName>NHL repeat-containing protein 1</fullName>
    </alternativeName>
    <alternativeName>
        <fullName evidence="3">RING-type E3 ubiquitin transferase NHLRC1</fullName>
    </alternativeName>
</protein>
<feature type="chain" id="PRO_0000055982" description="E3 ubiquitin-protein ligase NHLRC1">
    <location>
        <begin position="1"/>
        <end position="396"/>
    </location>
</feature>
<feature type="repeat" description="NHL 1">
    <location>
        <begin position="110"/>
        <end position="154"/>
    </location>
</feature>
<feature type="repeat" description="NHL 2">
    <location>
        <begin position="158"/>
        <end position="201"/>
    </location>
</feature>
<feature type="repeat" description="NHL 3">
    <location>
        <begin position="202"/>
        <end position="242"/>
    </location>
</feature>
<feature type="repeat" description="NHL 4">
    <location>
        <begin position="245"/>
        <end position="298"/>
    </location>
</feature>
<feature type="repeat" description="NHL 5">
    <location>
        <begin position="299"/>
        <end position="347"/>
    </location>
</feature>
<feature type="repeat" description="NHL 6">
    <location>
        <begin position="348"/>
        <end position="391"/>
    </location>
</feature>
<feature type="zinc finger region" description="RING-type" evidence="2">
    <location>
        <begin position="23"/>
        <end position="69"/>
    </location>
</feature>
<organism>
    <name type="scientific">Rattus norvegicus</name>
    <name type="common">Rat</name>
    <dbReference type="NCBI Taxonomy" id="10116"/>
    <lineage>
        <taxon>Eukaryota</taxon>
        <taxon>Metazoa</taxon>
        <taxon>Chordata</taxon>
        <taxon>Craniata</taxon>
        <taxon>Vertebrata</taxon>
        <taxon>Euteleostomi</taxon>
        <taxon>Mammalia</taxon>
        <taxon>Eutheria</taxon>
        <taxon>Euarchontoglires</taxon>
        <taxon>Glires</taxon>
        <taxon>Rodentia</taxon>
        <taxon>Myomorpha</taxon>
        <taxon>Muroidea</taxon>
        <taxon>Muridae</taxon>
        <taxon>Murinae</taxon>
        <taxon>Rattus</taxon>
    </lineage>
</organism>